<name>RL24_BRASO</name>
<feature type="chain" id="PRO_1000052187" description="Large ribosomal subunit protein uL24">
    <location>
        <begin position="1"/>
        <end position="104"/>
    </location>
</feature>
<dbReference type="EMBL" id="CU234118">
    <property type="protein sequence ID" value="CAL76879.1"/>
    <property type="molecule type" value="Genomic_DNA"/>
</dbReference>
<dbReference type="RefSeq" id="WP_006611849.1">
    <property type="nucleotide sequence ID" value="NC_009445.1"/>
</dbReference>
<dbReference type="SMR" id="A4YSK3"/>
<dbReference type="STRING" id="114615.BRADO3077"/>
<dbReference type="KEGG" id="bra:BRADO3077"/>
<dbReference type="eggNOG" id="COG0198">
    <property type="taxonomic scope" value="Bacteria"/>
</dbReference>
<dbReference type="HOGENOM" id="CLU_093315_2_2_5"/>
<dbReference type="OrthoDB" id="9807419at2"/>
<dbReference type="Proteomes" id="UP000001994">
    <property type="component" value="Chromosome"/>
</dbReference>
<dbReference type="GO" id="GO:1990904">
    <property type="term" value="C:ribonucleoprotein complex"/>
    <property type="evidence" value="ECO:0007669"/>
    <property type="project" value="UniProtKB-KW"/>
</dbReference>
<dbReference type="GO" id="GO:0005840">
    <property type="term" value="C:ribosome"/>
    <property type="evidence" value="ECO:0007669"/>
    <property type="project" value="UniProtKB-KW"/>
</dbReference>
<dbReference type="GO" id="GO:0019843">
    <property type="term" value="F:rRNA binding"/>
    <property type="evidence" value="ECO:0007669"/>
    <property type="project" value="UniProtKB-UniRule"/>
</dbReference>
<dbReference type="GO" id="GO:0003735">
    <property type="term" value="F:structural constituent of ribosome"/>
    <property type="evidence" value="ECO:0007669"/>
    <property type="project" value="InterPro"/>
</dbReference>
<dbReference type="GO" id="GO:0006412">
    <property type="term" value="P:translation"/>
    <property type="evidence" value="ECO:0007669"/>
    <property type="project" value="UniProtKB-UniRule"/>
</dbReference>
<dbReference type="CDD" id="cd06089">
    <property type="entry name" value="KOW_RPL26"/>
    <property type="match status" value="1"/>
</dbReference>
<dbReference type="FunFam" id="2.30.30.30:FF:000004">
    <property type="entry name" value="50S ribosomal protein L24"/>
    <property type="match status" value="1"/>
</dbReference>
<dbReference type="Gene3D" id="2.30.30.30">
    <property type="match status" value="1"/>
</dbReference>
<dbReference type="HAMAP" id="MF_01326_B">
    <property type="entry name" value="Ribosomal_uL24_B"/>
    <property type="match status" value="1"/>
</dbReference>
<dbReference type="InterPro" id="IPR005824">
    <property type="entry name" value="KOW"/>
</dbReference>
<dbReference type="InterPro" id="IPR014722">
    <property type="entry name" value="Rib_uL2_dom2"/>
</dbReference>
<dbReference type="InterPro" id="IPR003256">
    <property type="entry name" value="Ribosomal_uL24"/>
</dbReference>
<dbReference type="InterPro" id="IPR005825">
    <property type="entry name" value="Ribosomal_uL24_CS"/>
</dbReference>
<dbReference type="InterPro" id="IPR041988">
    <property type="entry name" value="Ribosomal_uL24_KOW"/>
</dbReference>
<dbReference type="InterPro" id="IPR008991">
    <property type="entry name" value="Translation_prot_SH3-like_sf"/>
</dbReference>
<dbReference type="NCBIfam" id="TIGR01079">
    <property type="entry name" value="rplX_bact"/>
    <property type="match status" value="1"/>
</dbReference>
<dbReference type="PANTHER" id="PTHR12903">
    <property type="entry name" value="MITOCHONDRIAL RIBOSOMAL PROTEIN L24"/>
    <property type="match status" value="1"/>
</dbReference>
<dbReference type="Pfam" id="PF00467">
    <property type="entry name" value="KOW"/>
    <property type="match status" value="1"/>
</dbReference>
<dbReference type="Pfam" id="PF17136">
    <property type="entry name" value="ribosomal_L24"/>
    <property type="match status" value="1"/>
</dbReference>
<dbReference type="SMART" id="SM00739">
    <property type="entry name" value="KOW"/>
    <property type="match status" value="1"/>
</dbReference>
<dbReference type="SUPFAM" id="SSF50104">
    <property type="entry name" value="Translation proteins SH3-like domain"/>
    <property type="match status" value="1"/>
</dbReference>
<dbReference type="PROSITE" id="PS01108">
    <property type="entry name" value="RIBOSOMAL_L24"/>
    <property type="match status" value="1"/>
</dbReference>
<reference key="1">
    <citation type="journal article" date="2007" name="Science">
        <title>Legumes symbioses: absence of nod genes in photosynthetic bradyrhizobia.</title>
        <authorList>
            <person name="Giraud E."/>
            <person name="Moulin L."/>
            <person name="Vallenet D."/>
            <person name="Barbe V."/>
            <person name="Cytryn E."/>
            <person name="Avarre J.-C."/>
            <person name="Jaubert M."/>
            <person name="Simon D."/>
            <person name="Cartieaux F."/>
            <person name="Prin Y."/>
            <person name="Bena G."/>
            <person name="Hannibal L."/>
            <person name="Fardoux J."/>
            <person name="Kojadinovic M."/>
            <person name="Vuillet L."/>
            <person name="Lajus A."/>
            <person name="Cruveiller S."/>
            <person name="Rouy Z."/>
            <person name="Mangenot S."/>
            <person name="Segurens B."/>
            <person name="Dossat C."/>
            <person name="Franck W.L."/>
            <person name="Chang W.-S."/>
            <person name="Saunders E."/>
            <person name="Bruce D."/>
            <person name="Richardson P."/>
            <person name="Normand P."/>
            <person name="Dreyfus B."/>
            <person name="Pignol D."/>
            <person name="Stacey G."/>
            <person name="Emerich D."/>
            <person name="Vermeglio A."/>
            <person name="Medigue C."/>
            <person name="Sadowsky M."/>
        </authorList>
    </citation>
    <scope>NUCLEOTIDE SEQUENCE [LARGE SCALE GENOMIC DNA]</scope>
    <source>
        <strain>ORS 278</strain>
    </source>
</reference>
<evidence type="ECO:0000255" key="1">
    <source>
        <dbReference type="HAMAP-Rule" id="MF_01326"/>
    </source>
</evidence>
<evidence type="ECO:0000305" key="2"/>
<protein>
    <recommendedName>
        <fullName evidence="1">Large ribosomal subunit protein uL24</fullName>
    </recommendedName>
    <alternativeName>
        <fullName evidence="2">50S ribosomal protein L24</fullName>
    </alternativeName>
</protein>
<sequence length="104" mass="11181">MAAKIRKGDKVIVLTGRDKGRTGEVFEVRPDAGTALVRGINLVKRHQKQTQNQEGGIITKEAPINLSNVAYVGKDGKPTRIGFKIQADGKKVRVAKSSGVEIDG</sequence>
<proteinExistence type="inferred from homology"/>
<accession>A4YSK3</accession>
<gene>
    <name evidence="1" type="primary">rplX</name>
    <name type="ordered locus">BRADO3077</name>
</gene>
<keyword id="KW-1185">Reference proteome</keyword>
<keyword id="KW-0687">Ribonucleoprotein</keyword>
<keyword id="KW-0689">Ribosomal protein</keyword>
<keyword id="KW-0694">RNA-binding</keyword>
<keyword id="KW-0699">rRNA-binding</keyword>
<comment type="function">
    <text evidence="1">One of two assembly initiator proteins, it binds directly to the 5'-end of the 23S rRNA, where it nucleates assembly of the 50S subunit.</text>
</comment>
<comment type="function">
    <text evidence="1">One of the proteins that surrounds the polypeptide exit tunnel on the outside of the subunit.</text>
</comment>
<comment type="subunit">
    <text evidence="1">Part of the 50S ribosomal subunit.</text>
</comment>
<comment type="similarity">
    <text evidence="1">Belongs to the universal ribosomal protein uL24 family.</text>
</comment>
<organism>
    <name type="scientific">Bradyrhizobium sp. (strain ORS 278)</name>
    <dbReference type="NCBI Taxonomy" id="114615"/>
    <lineage>
        <taxon>Bacteria</taxon>
        <taxon>Pseudomonadati</taxon>
        <taxon>Pseudomonadota</taxon>
        <taxon>Alphaproteobacteria</taxon>
        <taxon>Hyphomicrobiales</taxon>
        <taxon>Nitrobacteraceae</taxon>
        <taxon>Bradyrhizobium</taxon>
    </lineage>
</organism>